<proteinExistence type="inferred from homology"/>
<sequence>MLEVSNLTAIRDERVLFENLQFEIKPGELVQIEGRNGTGKTTLLRIVTGLGDRDEGSIKWKGEAIEKSRDQFHQDLLFLGHQTGVKRELTAFENLRFYQSIHNSDSSSERIFHALTQVGLAGREDVPVAQLSAGQQRRVALARLWLSHQILWILDEPLTAIDKQGVKVLESLFSNHVDNGGIVILTTHQDMFADSPKLRKIKLGD</sequence>
<feature type="chain" id="PRO_0000092220" description="Cytochrome c biogenesis ATP-binding export protein CcmA">
    <location>
        <begin position="1"/>
        <end position="205"/>
    </location>
</feature>
<feature type="domain" description="ABC transporter" evidence="1">
    <location>
        <begin position="2"/>
        <end position="204"/>
    </location>
</feature>
<feature type="binding site" evidence="1">
    <location>
        <begin position="34"/>
        <end position="41"/>
    </location>
    <ligand>
        <name>ATP</name>
        <dbReference type="ChEBI" id="CHEBI:30616"/>
    </ligand>
</feature>
<comment type="function">
    <text evidence="1">Part of the ABC transporter complex CcmAB involved in the biogenesis of c-type cytochromes; once thought to export heme, this seems not to be the case, but its exact role is uncertain. Responsible for energy coupling to the transport system.</text>
</comment>
<comment type="catalytic activity">
    <reaction evidence="1">
        <text>heme b(in) + ATP + H2O = heme b(out) + ADP + phosphate + H(+)</text>
        <dbReference type="Rhea" id="RHEA:19261"/>
        <dbReference type="ChEBI" id="CHEBI:15377"/>
        <dbReference type="ChEBI" id="CHEBI:15378"/>
        <dbReference type="ChEBI" id="CHEBI:30616"/>
        <dbReference type="ChEBI" id="CHEBI:43474"/>
        <dbReference type="ChEBI" id="CHEBI:60344"/>
        <dbReference type="ChEBI" id="CHEBI:456216"/>
        <dbReference type="EC" id="7.6.2.5"/>
    </reaction>
</comment>
<comment type="subunit">
    <text evidence="1">The complex is composed of two ATP-binding proteins (CcmA) and two transmembrane proteins (CcmB).</text>
</comment>
<comment type="subcellular location">
    <subcellularLocation>
        <location evidence="1">Cell inner membrane</location>
        <topology evidence="1">Peripheral membrane protein</topology>
    </subcellularLocation>
</comment>
<comment type="similarity">
    <text evidence="1">Belongs to the ABC transporter superfamily. CcmA exporter (TC 3.A.1.107) family.</text>
</comment>
<organism>
    <name type="scientific">Vibrio vulnificus (strain YJ016)</name>
    <dbReference type="NCBI Taxonomy" id="196600"/>
    <lineage>
        <taxon>Bacteria</taxon>
        <taxon>Pseudomonadati</taxon>
        <taxon>Pseudomonadota</taxon>
        <taxon>Gammaproteobacteria</taxon>
        <taxon>Vibrionales</taxon>
        <taxon>Vibrionaceae</taxon>
        <taxon>Vibrio</taxon>
    </lineage>
</organism>
<gene>
    <name evidence="1" type="primary">ccmA</name>
    <name type="ordered locus">VV2455</name>
</gene>
<protein>
    <recommendedName>
        <fullName evidence="1">Cytochrome c biogenesis ATP-binding export protein CcmA</fullName>
        <ecNumber evidence="1">7.6.2.5</ecNumber>
    </recommendedName>
    <alternativeName>
        <fullName evidence="1">Heme exporter protein A</fullName>
    </alternativeName>
</protein>
<evidence type="ECO:0000255" key="1">
    <source>
        <dbReference type="HAMAP-Rule" id="MF_01707"/>
    </source>
</evidence>
<dbReference type="EC" id="7.6.2.5" evidence="1"/>
<dbReference type="EMBL" id="BA000037">
    <property type="protein sequence ID" value="BAC95219.1"/>
    <property type="molecule type" value="Genomic_DNA"/>
</dbReference>
<dbReference type="RefSeq" id="WP_011150903.1">
    <property type="nucleotide sequence ID" value="NC_005139.1"/>
</dbReference>
<dbReference type="SMR" id="Q7MIR0"/>
<dbReference type="STRING" id="672.VV93_v1c21580"/>
<dbReference type="GeneID" id="93896183"/>
<dbReference type="KEGG" id="vvy:VV2455"/>
<dbReference type="eggNOG" id="COG4133">
    <property type="taxonomic scope" value="Bacteria"/>
</dbReference>
<dbReference type="HOGENOM" id="CLU_000604_1_2_6"/>
<dbReference type="Proteomes" id="UP000002675">
    <property type="component" value="Chromosome I"/>
</dbReference>
<dbReference type="GO" id="GO:0005886">
    <property type="term" value="C:plasma membrane"/>
    <property type="evidence" value="ECO:0007669"/>
    <property type="project" value="UniProtKB-SubCell"/>
</dbReference>
<dbReference type="GO" id="GO:0015439">
    <property type="term" value="F:ABC-type heme transporter activity"/>
    <property type="evidence" value="ECO:0007669"/>
    <property type="project" value="UniProtKB-EC"/>
</dbReference>
<dbReference type="GO" id="GO:0005524">
    <property type="term" value="F:ATP binding"/>
    <property type="evidence" value="ECO:0007669"/>
    <property type="project" value="UniProtKB-KW"/>
</dbReference>
<dbReference type="GO" id="GO:0016887">
    <property type="term" value="F:ATP hydrolysis activity"/>
    <property type="evidence" value="ECO:0007669"/>
    <property type="project" value="InterPro"/>
</dbReference>
<dbReference type="GO" id="GO:0017004">
    <property type="term" value="P:cytochrome complex assembly"/>
    <property type="evidence" value="ECO:0007669"/>
    <property type="project" value="UniProtKB-KW"/>
</dbReference>
<dbReference type="Gene3D" id="3.40.50.300">
    <property type="entry name" value="P-loop containing nucleotide triphosphate hydrolases"/>
    <property type="match status" value="1"/>
</dbReference>
<dbReference type="InterPro" id="IPR003593">
    <property type="entry name" value="AAA+_ATPase"/>
</dbReference>
<dbReference type="InterPro" id="IPR003439">
    <property type="entry name" value="ABC_transporter-like_ATP-bd"/>
</dbReference>
<dbReference type="InterPro" id="IPR017871">
    <property type="entry name" value="ABC_transporter-like_CS"/>
</dbReference>
<dbReference type="InterPro" id="IPR005895">
    <property type="entry name" value="ABC_transptr_haem_export_CcmA"/>
</dbReference>
<dbReference type="InterPro" id="IPR027417">
    <property type="entry name" value="P-loop_NTPase"/>
</dbReference>
<dbReference type="NCBIfam" id="TIGR01189">
    <property type="entry name" value="ccmA"/>
    <property type="match status" value="1"/>
</dbReference>
<dbReference type="NCBIfam" id="NF010061">
    <property type="entry name" value="PRK13538.1"/>
    <property type="match status" value="1"/>
</dbReference>
<dbReference type="PANTHER" id="PTHR43499">
    <property type="entry name" value="ABC TRANSPORTER I FAMILY MEMBER 1"/>
    <property type="match status" value="1"/>
</dbReference>
<dbReference type="PANTHER" id="PTHR43499:SF1">
    <property type="entry name" value="ABC TRANSPORTER I FAMILY MEMBER 1"/>
    <property type="match status" value="1"/>
</dbReference>
<dbReference type="Pfam" id="PF00005">
    <property type="entry name" value="ABC_tran"/>
    <property type="match status" value="1"/>
</dbReference>
<dbReference type="SMART" id="SM00382">
    <property type="entry name" value="AAA"/>
    <property type="match status" value="1"/>
</dbReference>
<dbReference type="SUPFAM" id="SSF52540">
    <property type="entry name" value="P-loop containing nucleoside triphosphate hydrolases"/>
    <property type="match status" value="1"/>
</dbReference>
<dbReference type="PROSITE" id="PS00211">
    <property type="entry name" value="ABC_TRANSPORTER_1"/>
    <property type="match status" value="1"/>
</dbReference>
<dbReference type="PROSITE" id="PS50893">
    <property type="entry name" value="ABC_TRANSPORTER_2"/>
    <property type="match status" value="1"/>
</dbReference>
<dbReference type="PROSITE" id="PS51243">
    <property type="entry name" value="CCMA"/>
    <property type="match status" value="1"/>
</dbReference>
<name>CCMA_VIBVY</name>
<reference key="1">
    <citation type="journal article" date="2003" name="Genome Res.">
        <title>Comparative genome analysis of Vibrio vulnificus, a marine pathogen.</title>
        <authorList>
            <person name="Chen C.-Y."/>
            <person name="Wu K.-M."/>
            <person name="Chang Y.-C."/>
            <person name="Chang C.-H."/>
            <person name="Tsai H.-C."/>
            <person name="Liao T.-L."/>
            <person name="Liu Y.-M."/>
            <person name="Chen H.-J."/>
            <person name="Shen A.B.-T."/>
            <person name="Li J.-C."/>
            <person name="Su T.-L."/>
            <person name="Shao C.-P."/>
            <person name="Lee C.-T."/>
            <person name="Hor L.-I."/>
            <person name="Tsai S.-F."/>
        </authorList>
    </citation>
    <scope>NUCLEOTIDE SEQUENCE [LARGE SCALE GENOMIC DNA]</scope>
    <source>
        <strain>YJ016</strain>
    </source>
</reference>
<keyword id="KW-0067">ATP-binding</keyword>
<keyword id="KW-0997">Cell inner membrane</keyword>
<keyword id="KW-1003">Cell membrane</keyword>
<keyword id="KW-0201">Cytochrome c-type biogenesis</keyword>
<keyword id="KW-0472">Membrane</keyword>
<keyword id="KW-0547">Nucleotide-binding</keyword>
<keyword id="KW-1278">Translocase</keyword>
<keyword id="KW-0813">Transport</keyword>
<accession>Q7MIR0</accession>